<organism>
    <name type="scientific">Campylobacter concisus (strain 13826)</name>
    <dbReference type="NCBI Taxonomy" id="360104"/>
    <lineage>
        <taxon>Bacteria</taxon>
        <taxon>Pseudomonadati</taxon>
        <taxon>Campylobacterota</taxon>
        <taxon>Epsilonproteobacteria</taxon>
        <taxon>Campylobacterales</taxon>
        <taxon>Campylobacteraceae</taxon>
        <taxon>Campylobacter</taxon>
    </lineage>
</organism>
<proteinExistence type="inferred from homology"/>
<keyword id="KW-0004">4Fe-4S</keyword>
<keyword id="KW-0963">Cytoplasm</keyword>
<keyword id="KW-0408">Iron</keyword>
<keyword id="KW-0411">Iron-sulfur</keyword>
<keyword id="KW-0479">Metal-binding</keyword>
<keyword id="KW-0949">S-adenosyl-L-methionine</keyword>
<keyword id="KW-0808">Transferase</keyword>
<keyword id="KW-0819">tRNA processing</keyword>
<gene>
    <name evidence="1" type="primary">miaB</name>
    <name type="ordered locus">Ccon26_11590</name>
    <name type="ORF">CCC13826_0597</name>
</gene>
<reference key="1">
    <citation type="submission" date="2007-10" db="EMBL/GenBank/DDBJ databases">
        <title>Genome sequence of Campylobacter concisus 13826 isolated from human feces.</title>
        <authorList>
            <person name="Fouts D.E."/>
            <person name="Mongodin E.F."/>
            <person name="Puiu D."/>
            <person name="Sebastian Y."/>
            <person name="Miller W.G."/>
            <person name="Mandrell R.E."/>
            <person name="On S."/>
            <person name="Nelson K.E."/>
        </authorList>
    </citation>
    <scope>NUCLEOTIDE SEQUENCE [LARGE SCALE GENOMIC DNA]</scope>
    <source>
        <strain>13826</strain>
    </source>
</reference>
<dbReference type="EC" id="2.8.4.3" evidence="1"/>
<dbReference type="EMBL" id="CP000792">
    <property type="protein sequence ID" value="EAT97405.1"/>
    <property type="molecule type" value="Genomic_DNA"/>
</dbReference>
<dbReference type="RefSeq" id="WP_012139940.1">
    <property type="nucleotide sequence ID" value="NC_009802.2"/>
</dbReference>
<dbReference type="SMR" id="A7ZE07"/>
<dbReference type="STRING" id="360104.CCC13826_0597"/>
<dbReference type="KEGG" id="cco:CCC13826_0597"/>
<dbReference type="eggNOG" id="COG0621">
    <property type="taxonomic scope" value="Bacteria"/>
</dbReference>
<dbReference type="HOGENOM" id="CLU_018697_2_0_7"/>
<dbReference type="OrthoDB" id="9805215at2"/>
<dbReference type="Proteomes" id="UP000001121">
    <property type="component" value="Chromosome"/>
</dbReference>
<dbReference type="GO" id="GO:0005829">
    <property type="term" value="C:cytosol"/>
    <property type="evidence" value="ECO:0007669"/>
    <property type="project" value="TreeGrafter"/>
</dbReference>
<dbReference type="GO" id="GO:0051539">
    <property type="term" value="F:4 iron, 4 sulfur cluster binding"/>
    <property type="evidence" value="ECO:0007669"/>
    <property type="project" value="UniProtKB-UniRule"/>
</dbReference>
<dbReference type="GO" id="GO:0046872">
    <property type="term" value="F:metal ion binding"/>
    <property type="evidence" value="ECO:0007669"/>
    <property type="project" value="UniProtKB-KW"/>
</dbReference>
<dbReference type="GO" id="GO:0035597">
    <property type="term" value="F:N6-isopentenyladenosine methylthiotransferase activity"/>
    <property type="evidence" value="ECO:0007669"/>
    <property type="project" value="TreeGrafter"/>
</dbReference>
<dbReference type="CDD" id="cd01335">
    <property type="entry name" value="Radical_SAM"/>
    <property type="match status" value="1"/>
</dbReference>
<dbReference type="FunFam" id="3.40.50.12160:FF:000003">
    <property type="entry name" value="CDK5 regulatory subunit-associated protein 1"/>
    <property type="match status" value="1"/>
</dbReference>
<dbReference type="FunFam" id="3.80.30.20:FF:000001">
    <property type="entry name" value="tRNA-2-methylthio-N(6)-dimethylallyladenosine synthase 2"/>
    <property type="match status" value="1"/>
</dbReference>
<dbReference type="Gene3D" id="3.40.50.12160">
    <property type="entry name" value="Methylthiotransferase, N-terminal domain"/>
    <property type="match status" value="1"/>
</dbReference>
<dbReference type="Gene3D" id="3.80.30.20">
    <property type="entry name" value="tm_1862 like domain"/>
    <property type="match status" value="1"/>
</dbReference>
<dbReference type="HAMAP" id="MF_01864">
    <property type="entry name" value="tRNA_metthiotr_MiaB"/>
    <property type="match status" value="1"/>
</dbReference>
<dbReference type="InterPro" id="IPR006638">
    <property type="entry name" value="Elp3/MiaA/NifB-like_rSAM"/>
</dbReference>
<dbReference type="InterPro" id="IPR005839">
    <property type="entry name" value="Methylthiotransferase"/>
</dbReference>
<dbReference type="InterPro" id="IPR020612">
    <property type="entry name" value="Methylthiotransferase_CS"/>
</dbReference>
<dbReference type="InterPro" id="IPR013848">
    <property type="entry name" value="Methylthiotransferase_N"/>
</dbReference>
<dbReference type="InterPro" id="IPR038135">
    <property type="entry name" value="Methylthiotransferase_N_sf"/>
</dbReference>
<dbReference type="InterPro" id="IPR006463">
    <property type="entry name" value="MiaB_methiolase"/>
</dbReference>
<dbReference type="InterPro" id="IPR007197">
    <property type="entry name" value="rSAM"/>
</dbReference>
<dbReference type="InterPro" id="IPR023404">
    <property type="entry name" value="rSAM_horseshoe"/>
</dbReference>
<dbReference type="InterPro" id="IPR002792">
    <property type="entry name" value="TRAM_dom"/>
</dbReference>
<dbReference type="NCBIfam" id="TIGR01574">
    <property type="entry name" value="miaB-methiolase"/>
    <property type="match status" value="1"/>
</dbReference>
<dbReference type="NCBIfam" id="TIGR00089">
    <property type="entry name" value="MiaB/RimO family radical SAM methylthiotransferase"/>
    <property type="match status" value="1"/>
</dbReference>
<dbReference type="PANTHER" id="PTHR43020">
    <property type="entry name" value="CDK5 REGULATORY SUBUNIT-ASSOCIATED PROTEIN 1"/>
    <property type="match status" value="1"/>
</dbReference>
<dbReference type="PANTHER" id="PTHR43020:SF2">
    <property type="entry name" value="MITOCHONDRIAL TRNA METHYLTHIOTRANSFERASE CDK5RAP1"/>
    <property type="match status" value="1"/>
</dbReference>
<dbReference type="Pfam" id="PF04055">
    <property type="entry name" value="Radical_SAM"/>
    <property type="match status" value="1"/>
</dbReference>
<dbReference type="Pfam" id="PF00919">
    <property type="entry name" value="UPF0004"/>
    <property type="match status" value="1"/>
</dbReference>
<dbReference type="SFLD" id="SFLDF00273">
    <property type="entry name" value="(dimethylallyl)adenosine_tRNA"/>
    <property type="match status" value="1"/>
</dbReference>
<dbReference type="SFLD" id="SFLDG01082">
    <property type="entry name" value="B12-binding_domain_containing"/>
    <property type="match status" value="1"/>
</dbReference>
<dbReference type="SFLD" id="SFLDS00029">
    <property type="entry name" value="Radical_SAM"/>
    <property type="match status" value="1"/>
</dbReference>
<dbReference type="SMART" id="SM00729">
    <property type="entry name" value="Elp3"/>
    <property type="match status" value="1"/>
</dbReference>
<dbReference type="SUPFAM" id="SSF102114">
    <property type="entry name" value="Radical SAM enzymes"/>
    <property type="match status" value="1"/>
</dbReference>
<dbReference type="PROSITE" id="PS51449">
    <property type="entry name" value="MTTASE_N"/>
    <property type="match status" value="1"/>
</dbReference>
<dbReference type="PROSITE" id="PS01278">
    <property type="entry name" value="MTTASE_RADICAL"/>
    <property type="match status" value="1"/>
</dbReference>
<dbReference type="PROSITE" id="PS51918">
    <property type="entry name" value="RADICAL_SAM"/>
    <property type="match status" value="1"/>
</dbReference>
<dbReference type="PROSITE" id="PS50926">
    <property type="entry name" value="TRAM"/>
    <property type="match status" value="1"/>
</dbReference>
<protein>
    <recommendedName>
        <fullName evidence="1">tRNA-2-methylthio-N(6)-dimethylallyladenosine synthase</fullName>
        <ecNumber evidence="1">2.8.4.3</ecNumber>
    </recommendedName>
    <alternativeName>
        <fullName evidence="1">(Dimethylallyl)adenosine tRNA methylthiotransferase MiaB</fullName>
    </alternativeName>
    <alternativeName>
        <fullName evidence="1">tRNA-i(6)A37 methylthiotransferase</fullName>
    </alternativeName>
</protein>
<accession>A7ZE07</accession>
<sequence>MSKKLFIQTLGCAMNVRDSEHIIAELSQKEDYSLTQNIEEADLILINTCSVREKPVHKLFSEVGAFEKAKKRGAKIGVCGCTASHLGSEIFKRAPYVDFVLGARNVSKITKAVNTPKFISTDINHDESEYAFGEFRGSPYKSHINISIGCDKKCTYCIVPHTRGDEISIPSSLILKEVEKAAKSGAKEIFLLGQNVNNYGKRFSGVQENIDFSDLLVKISEIEGVERIRFTSPHPLHMDDKFLEIFTNNPKICKSMHMPLQSGNTKVLREMKRGYTKEWFLDRALRLRKMCPDVSISTDIIVAFPGESDNEFEDTMDVLEQVRFEQIFSFKYSPRPLTKAATFINQIDDKTASERLTRLQNRHSEILDEIVAAQKDKIFDVYFEELRANGGVAGRSFNNFLVQVDGSEELLGTTQKAKITNPKRMVLYGELQI</sequence>
<comment type="function">
    <text evidence="1">Catalyzes the methylthiolation of N6-(dimethylallyl)adenosine (i(6)A), leading to the formation of 2-methylthio-N6-(dimethylallyl)adenosine (ms(2)i(6)A) at position 37 in tRNAs that read codons beginning with uridine.</text>
</comment>
<comment type="catalytic activity">
    <reaction evidence="1">
        <text>N(6)-dimethylallyladenosine(37) in tRNA + (sulfur carrier)-SH + AH2 + 2 S-adenosyl-L-methionine = 2-methylsulfanyl-N(6)-dimethylallyladenosine(37) in tRNA + (sulfur carrier)-H + 5'-deoxyadenosine + L-methionine + A + S-adenosyl-L-homocysteine + 2 H(+)</text>
        <dbReference type="Rhea" id="RHEA:37067"/>
        <dbReference type="Rhea" id="RHEA-COMP:10375"/>
        <dbReference type="Rhea" id="RHEA-COMP:10376"/>
        <dbReference type="Rhea" id="RHEA-COMP:14737"/>
        <dbReference type="Rhea" id="RHEA-COMP:14739"/>
        <dbReference type="ChEBI" id="CHEBI:13193"/>
        <dbReference type="ChEBI" id="CHEBI:15378"/>
        <dbReference type="ChEBI" id="CHEBI:17319"/>
        <dbReference type="ChEBI" id="CHEBI:17499"/>
        <dbReference type="ChEBI" id="CHEBI:29917"/>
        <dbReference type="ChEBI" id="CHEBI:57844"/>
        <dbReference type="ChEBI" id="CHEBI:57856"/>
        <dbReference type="ChEBI" id="CHEBI:59789"/>
        <dbReference type="ChEBI" id="CHEBI:64428"/>
        <dbReference type="ChEBI" id="CHEBI:74415"/>
        <dbReference type="ChEBI" id="CHEBI:74417"/>
        <dbReference type="EC" id="2.8.4.3"/>
    </reaction>
</comment>
<comment type="cofactor">
    <cofactor evidence="1">
        <name>[4Fe-4S] cluster</name>
        <dbReference type="ChEBI" id="CHEBI:49883"/>
    </cofactor>
    <text evidence="1">Binds 2 [4Fe-4S] clusters. One cluster is coordinated with 3 cysteines and an exchangeable S-adenosyl-L-methionine.</text>
</comment>
<comment type="subunit">
    <text evidence="1">Monomer.</text>
</comment>
<comment type="subcellular location">
    <subcellularLocation>
        <location evidence="1">Cytoplasm</location>
    </subcellularLocation>
</comment>
<comment type="similarity">
    <text evidence="1">Belongs to the methylthiotransferase family. MiaB subfamily.</text>
</comment>
<name>MIAB_CAMC1</name>
<evidence type="ECO:0000255" key="1">
    <source>
        <dbReference type="HAMAP-Rule" id="MF_01864"/>
    </source>
</evidence>
<evidence type="ECO:0000255" key="2">
    <source>
        <dbReference type="PROSITE-ProRule" id="PRU01266"/>
    </source>
</evidence>
<feature type="chain" id="PRO_0000374194" description="tRNA-2-methylthio-N(6)-dimethylallyladenosine synthase">
    <location>
        <begin position="1"/>
        <end position="433"/>
    </location>
</feature>
<feature type="domain" description="MTTase N-terminal" evidence="1">
    <location>
        <begin position="3"/>
        <end position="118"/>
    </location>
</feature>
<feature type="domain" description="Radical SAM core" evidence="2">
    <location>
        <begin position="136"/>
        <end position="369"/>
    </location>
</feature>
<feature type="domain" description="TRAM" evidence="1">
    <location>
        <begin position="372"/>
        <end position="433"/>
    </location>
</feature>
<feature type="binding site" evidence="1">
    <location>
        <position position="12"/>
    </location>
    <ligand>
        <name>[4Fe-4S] cluster</name>
        <dbReference type="ChEBI" id="CHEBI:49883"/>
        <label>1</label>
    </ligand>
</feature>
<feature type="binding site" evidence="1">
    <location>
        <position position="49"/>
    </location>
    <ligand>
        <name>[4Fe-4S] cluster</name>
        <dbReference type="ChEBI" id="CHEBI:49883"/>
        <label>1</label>
    </ligand>
</feature>
<feature type="binding site" evidence="1">
    <location>
        <position position="81"/>
    </location>
    <ligand>
        <name>[4Fe-4S] cluster</name>
        <dbReference type="ChEBI" id="CHEBI:49883"/>
        <label>1</label>
    </ligand>
</feature>
<feature type="binding site" evidence="1">
    <location>
        <position position="150"/>
    </location>
    <ligand>
        <name>[4Fe-4S] cluster</name>
        <dbReference type="ChEBI" id="CHEBI:49883"/>
        <label>2</label>
        <note>4Fe-4S-S-AdoMet</note>
    </ligand>
</feature>
<feature type="binding site" evidence="1">
    <location>
        <position position="154"/>
    </location>
    <ligand>
        <name>[4Fe-4S] cluster</name>
        <dbReference type="ChEBI" id="CHEBI:49883"/>
        <label>2</label>
        <note>4Fe-4S-S-AdoMet</note>
    </ligand>
</feature>
<feature type="binding site" evidence="1">
    <location>
        <position position="157"/>
    </location>
    <ligand>
        <name>[4Fe-4S] cluster</name>
        <dbReference type="ChEBI" id="CHEBI:49883"/>
        <label>2</label>
        <note>4Fe-4S-S-AdoMet</note>
    </ligand>
</feature>